<comment type="function">
    <text evidence="1">Involved in the biosynthesis of isopentenyl diphosphate (IPP) and dimethylallyl diphosphate (DMAPP), two major building blocks of isoprenoid compounds. Catalyzes the conversion of 4-diphosphocytidyl-2-C-methyl-D-erythritol 2-phosphate (CDP-ME2P) to 2-C-methyl-D-erythritol 2,4-cyclodiphosphate (ME-CPP) with a corresponding release of cytidine 5-monophosphate (CMP).</text>
</comment>
<comment type="catalytic activity">
    <reaction evidence="1">
        <text>4-CDP-2-C-methyl-D-erythritol 2-phosphate = 2-C-methyl-D-erythritol 2,4-cyclic diphosphate + CMP</text>
        <dbReference type="Rhea" id="RHEA:23864"/>
        <dbReference type="ChEBI" id="CHEBI:57919"/>
        <dbReference type="ChEBI" id="CHEBI:58483"/>
        <dbReference type="ChEBI" id="CHEBI:60377"/>
        <dbReference type="EC" id="4.6.1.12"/>
    </reaction>
</comment>
<comment type="cofactor">
    <cofactor evidence="1">
        <name>a divalent metal cation</name>
        <dbReference type="ChEBI" id="CHEBI:60240"/>
    </cofactor>
    <text evidence="1">Binds 1 divalent metal cation per subunit.</text>
</comment>
<comment type="pathway">
    <text evidence="1">Isoprenoid biosynthesis; isopentenyl diphosphate biosynthesis via DXP pathway; isopentenyl diphosphate from 1-deoxy-D-xylulose 5-phosphate: step 4/6.</text>
</comment>
<comment type="subunit">
    <text evidence="1">Homotrimer.</text>
</comment>
<comment type="similarity">
    <text evidence="1">Belongs to the IspF family.</text>
</comment>
<evidence type="ECO:0000255" key="1">
    <source>
        <dbReference type="HAMAP-Rule" id="MF_00107"/>
    </source>
</evidence>
<sequence>MRIGLGYDVHRLVENRKLILGGVEIPYEKGLLGHSDADVLIHAIIDSLLGACALGDIGKHFPDTDSRFSGISSIILLEETGKLLLKSGYAINNIDATIIAQKPKMLPHIENMRKNISIALNIDINKINIKATTEEGLGFTGEMLGISSQSISSVESII</sequence>
<name>ISPF_CLOB8</name>
<gene>
    <name evidence="1" type="primary">ispF</name>
    <name type="ordered locus">Cbei_0297</name>
</gene>
<reference key="1">
    <citation type="submission" date="2007-06" db="EMBL/GenBank/DDBJ databases">
        <title>Complete sequence of Clostridium beijerinckii NCIMB 8052.</title>
        <authorList>
            <consortium name="US DOE Joint Genome Institute"/>
            <person name="Copeland A."/>
            <person name="Lucas S."/>
            <person name="Lapidus A."/>
            <person name="Barry K."/>
            <person name="Detter J.C."/>
            <person name="Glavina del Rio T."/>
            <person name="Hammon N."/>
            <person name="Israni S."/>
            <person name="Dalin E."/>
            <person name="Tice H."/>
            <person name="Pitluck S."/>
            <person name="Sims D."/>
            <person name="Brettin T."/>
            <person name="Bruce D."/>
            <person name="Tapia R."/>
            <person name="Brainard J."/>
            <person name="Schmutz J."/>
            <person name="Larimer F."/>
            <person name="Land M."/>
            <person name="Hauser L."/>
            <person name="Kyrpides N."/>
            <person name="Mikhailova N."/>
            <person name="Bennet G."/>
            <person name="Cann I."/>
            <person name="Chen J.-S."/>
            <person name="Contreras A.L."/>
            <person name="Jones D."/>
            <person name="Kashket E."/>
            <person name="Mitchell W."/>
            <person name="Stoddard S."/>
            <person name="Schwarz W."/>
            <person name="Qureshi N."/>
            <person name="Young M."/>
            <person name="Shi Z."/>
            <person name="Ezeji T."/>
            <person name="White B."/>
            <person name="Blaschek H."/>
            <person name="Richardson P."/>
        </authorList>
    </citation>
    <scope>NUCLEOTIDE SEQUENCE [LARGE SCALE GENOMIC DNA]</scope>
    <source>
        <strain>ATCC 51743 / NCIMB 8052</strain>
    </source>
</reference>
<organism>
    <name type="scientific">Clostridium beijerinckii (strain ATCC 51743 / NCIMB 8052)</name>
    <name type="common">Clostridium acetobutylicum</name>
    <dbReference type="NCBI Taxonomy" id="290402"/>
    <lineage>
        <taxon>Bacteria</taxon>
        <taxon>Bacillati</taxon>
        <taxon>Bacillota</taxon>
        <taxon>Clostridia</taxon>
        <taxon>Eubacteriales</taxon>
        <taxon>Clostridiaceae</taxon>
        <taxon>Clostridium</taxon>
    </lineage>
</organism>
<accession>A6LQ55</accession>
<dbReference type="EC" id="4.6.1.12" evidence="1"/>
<dbReference type="EMBL" id="CP000721">
    <property type="protein sequence ID" value="ABR32485.1"/>
    <property type="molecule type" value="Genomic_DNA"/>
</dbReference>
<dbReference type="RefSeq" id="WP_011967647.1">
    <property type="nucleotide sequence ID" value="NC_009617.1"/>
</dbReference>
<dbReference type="SMR" id="A6LQ55"/>
<dbReference type="KEGG" id="cbe:Cbei_0297"/>
<dbReference type="eggNOG" id="COG0245">
    <property type="taxonomic scope" value="Bacteria"/>
</dbReference>
<dbReference type="HOGENOM" id="CLU_084630_2_0_9"/>
<dbReference type="UniPathway" id="UPA00056">
    <property type="reaction ID" value="UER00095"/>
</dbReference>
<dbReference type="Proteomes" id="UP000000565">
    <property type="component" value="Chromosome"/>
</dbReference>
<dbReference type="GO" id="GO:0008685">
    <property type="term" value="F:2-C-methyl-D-erythritol 2,4-cyclodiphosphate synthase activity"/>
    <property type="evidence" value="ECO:0007669"/>
    <property type="project" value="UniProtKB-UniRule"/>
</dbReference>
<dbReference type="GO" id="GO:0046872">
    <property type="term" value="F:metal ion binding"/>
    <property type="evidence" value="ECO:0007669"/>
    <property type="project" value="UniProtKB-KW"/>
</dbReference>
<dbReference type="GO" id="GO:0019288">
    <property type="term" value="P:isopentenyl diphosphate biosynthetic process, methylerythritol 4-phosphate pathway"/>
    <property type="evidence" value="ECO:0007669"/>
    <property type="project" value="UniProtKB-UniRule"/>
</dbReference>
<dbReference type="GO" id="GO:0016114">
    <property type="term" value="P:terpenoid biosynthetic process"/>
    <property type="evidence" value="ECO:0007669"/>
    <property type="project" value="InterPro"/>
</dbReference>
<dbReference type="CDD" id="cd00554">
    <property type="entry name" value="MECDP_synthase"/>
    <property type="match status" value="1"/>
</dbReference>
<dbReference type="FunFam" id="3.30.1330.50:FF:000001">
    <property type="entry name" value="2-C-methyl-D-erythritol 2,4-cyclodiphosphate synthase"/>
    <property type="match status" value="1"/>
</dbReference>
<dbReference type="Gene3D" id="3.30.1330.50">
    <property type="entry name" value="2-C-methyl-D-erythritol 2,4-cyclodiphosphate synthase"/>
    <property type="match status" value="1"/>
</dbReference>
<dbReference type="HAMAP" id="MF_00107">
    <property type="entry name" value="IspF"/>
    <property type="match status" value="1"/>
</dbReference>
<dbReference type="InterPro" id="IPR003526">
    <property type="entry name" value="MECDP_synthase"/>
</dbReference>
<dbReference type="InterPro" id="IPR020555">
    <property type="entry name" value="MECDP_synthase_CS"/>
</dbReference>
<dbReference type="InterPro" id="IPR036571">
    <property type="entry name" value="MECDP_synthase_sf"/>
</dbReference>
<dbReference type="NCBIfam" id="TIGR00151">
    <property type="entry name" value="ispF"/>
    <property type="match status" value="1"/>
</dbReference>
<dbReference type="PANTHER" id="PTHR43181">
    <property type="entry name" value="2-C-METHYL-D-ERYTHRITOL 2,4-CYCLODIPHOSPHATE SYNTHASE, CHLOROPLASTIC"/>
    <property type="match status" value="1"/>
</dbReference>
<dbReference type="PANTHER" id="PTHR43181:SF1">
    <property type="entry name" value="2-C-METHYL-D-ERYTHRITOL 2,4-CYCLODIPHOSPHATE SYNTHASE, CHLOROPLASTIC"/>
    <property type="match status" value="1"/>
</dbReference>
<dbReference type="Pfam" id="PF02542">
    <property type="entry name" value="YgbB"/>
    <property type="match status" value="1"/>
</dbReference>
<dbReference type="SUPFAM" id="SSF69765">
    <property type="entry name" value="IpsF-like"/>
    <property type="match status" value="1"/>
</dbReference>
<dbReference type="PROSITE" id="PS01350">
    <property type="entry name" value="ISPF"/>
    <property type="match status" value="1"/>
</dbReference>
<feature type="chain" id="PRO_1000075908" description="2-C-methyl-D-erythritol 2,4-cyclodiphosphate synthase">
    <location>
        <begin position="1"/>
        <end position="158"/>
    </location>
</feature>
<feature type="binding site" evidence="1">
    <location>
        <begin position="8"/>
        <end position="10"/>
    </location>
    <ligand>
        <name>4-CDP-2-C-methyl-D-erythritol 2-phosphate</name>
        <dbReference type="ChEBI" id="CHEBI:57919"/>
    </ligand>
</feature>
<feature type="binding site" evidence="1">
    <location>
        <position position="8"/>
    </location>
    <ligand>
        <name>a divalent metal cation</name>
        <dbReference type="ChEBI" id="CHEBI:60240"/>
    </ligand>
</feature>
<feature type="binding site" evidence="1">
    <location>
        <position position="10"/>
    </location>
    <ligand>
        <name>a divalent metal cation</name>
        <dbReference type="ChEBI" id="CHEBI:60240"/>
    </ligand>
</feature>
<feature type="binding site" evidence="1">
    <location>
        <begin position="34"/>
        <end position="35"/>
    </location>
    <ligand>
        <name>4-CDP-2-C-methyl-D-erythritol 2-phosphate</name>
        <dbReference type="ChEBI" id="CHEBI:57919"/>
    </ligand>
</feature>
<feature type="binding site" evidence="1">
    <location>
        <position position="42"/>
    </location>
    <ligand>
        <name>a divalent metal cation</name>
        <dbReference type="ChEBI" id="CHEBI:60240"/>
    </ligand>
</feature>
<feature type="binding site" evidence="1">
    <location>
        <begin position="56"/>
        <end position="58"/>
    </location>
    <ligand>
        <name>4-CDP-2-C-methyl-D-erythritol 2-phosphate</name>
        <dbReference type="ChEBI" id="CHEBI:57919"/>
    </ligand>
</feature>
<feature type="binding site" evidence="1">
    <location>
        <begin position="61"/>
        <end position="65"/>
    </location>
    <ligand>
        <name>4-CDP-2-C-methyl-D-erythritol 2-phosphate</name>
        <dbReference type="ChEBI" id="CHEBI:57919"/>
    </ligand>
</feature>
<feature type="binding site" evidence="1">
    <location>
        <begin position="100"/>
        <end position="106"/>
    </location>
    <ligand>
        <name>4-CDP-2-C-methyl-D-erythritol 2-phosphate</name>
        <dbReference type="ChEBI" id="CHEBI:57919"/>
    </ligand>
</feature>
<feature type="binding site" evidence="1">
    <location>
        <begin position="132"/>
        <end position="135"/>
    </location>
    <ligand>
        <name>4-CDP-2-C-methyl-D-erythritol 2-phosphate</name>
        <dbReference type="ChEBI" id="CHEBI:57919"/>
    </ligand>
</feature>
<feature type="binding site" evidence="1">
    <location>
        <position position="139"/>
    </location>
    <ligand>
        <name>4-CDP-2-C-methyl-D-erythritol 2-phosphate</name>
        <dbReference type="ChEBI" id="CHEBI:57919"/>
    </ligand>
</feature>
<feature type="site" description="Transition state stabilizer" evidence="1">
    <location>
        <position position="34"/>
    </location>
</feature>
<feature type="site" description="Transition state stabilizer" evidence="1">
    <location>
        <position position="133"/>
    </location>
</feature>
<proteinExistence type="inferred from homology"/>
<keyword id="KW-0414">Isoprene biosynthesis</keyword>
<keyword id="KW-0456">Lyase</keyword>
<keyword id="KW-0479">Metal-binding</keyword>
<protein>
    <recommendedName>
        <fullName evidence="1">2-C-methyl-D-erythritol 2,4-cyclodiphosphate synthase</fullName>
        <shortName evidence="1">MECDP-synthase</shortName>
        <shortName evidence="1">MECPP-synthase</shortName>
        <shortName evidence="1">MECPS</shortName>
        <ecNumber evidence="1">4.6.1.12</ecNumber>
    </recommendedName>
</protein>